<keyword id="KW-1003">Cell membrane</keyword>
<keyword id="KW-0472">Membrane</keyword>
<keyword id="KW-0812">Transmembrane</keyword>
<keyword id="KW-1133">Transmembrane helix</keyword>
<accession>Q3KKB8</accession>
<reference key="1">
    <citation type="journal article" date="2009" name="Genome Biol.">
        <title>Genomic and genetic analyses of diversity and plant interactions of Pseudomonas fluorescens.</title>
        <authorList>
            <person name="Silby M.W."/>
            <person name="Cerdeno-Tarraga A.M."/>
            <person name="Vernikos G.S."/>
            <person name="Giddens S.R."/>
            <person name="Jackson R.W."/>
            <person name="Preston G.M."/>
            <person name="Zhang X.-X."/>
            <person name="Moon C.D."/>
            <person name="Gehrig S.M."/>
            <person name="Godfrey S.A.C."/>
            <person name="Knight C.G."/>
            <person name="Malone J.G."/>
            <person name="Robinson Z."/>
            <person name="Spiers A.J."/>
            <person name="Harris S."/>
            <person name="Challis G.L."/>
            <person name="Yaxley A.M."/>
            <person name="Harris D."/>
            <person name="Seeger K."/>
            <person name="Murphy L."/>
            <person name="Rutter S."/>
            <person name="Squares R."/>
            <person name="Quail M.A."/>
            <person name="Saunders E."/>
            <person name="Mavromatis K."/>
            <person name="Brettin T.S."/>
            <person name="Bentley S.D."/>
            <person name="Hothersall J."/>
            <person name="Stephens E."/>
            <person name="Thomas C.M."/>
            <person name="Parkhill J."/>
            <person name="Levy S.B."/>
            <person name="Rainey P.B."/>
            <person name="Thomson N.R."/>
        </authorList>
    </citation>
    <scope>NUCLEOTIDE SEQUENCE [LARGE SCALE GENOMIC DNA]</scope>
    <source>
        <strain>Pf0-1</strain>
    </source>
</reference>
<organism>
    <name type="scientific">Pseudomonas fluorescens (strain Pf0-1)</name>
    <dbReference type="NCBI Taxonomy" id="205922"/>
    <lineage>
        <taxon>Bacteria</taxon>
        <taxon>Pseudomonadati</taxon>
        <taxon>Pseudomonadota</taxon>
        <taxon>Gammaproteobacteria</taxon>
        <taxon>Pseudomonadales</taxon>
        <taxon>Pseudomonadaceae</taxon>
        <taxon>Pseudomonas</taxon>
    </lineage>
</organism>
<proteinExistence type="inferred from homology"/>
<protein>
    <recommendedName>
        <fullName evidence="1">UPF0391 membrane protein Pfl01_0044</fullName>
    </recommendedName>
</protein>
<sequence length="54" mass="5724">MLSWAITFLIIAIIAAVLGFGGIAGTATGIAKILFVVFLVMFIASFFFGRRGRG</sequence>
<gene>
    <name type="ordered locus">Pfl01_0044</name>
</gene>
<comment type="subcellular location">
    <subcellularLocation>
        <location evidence="1">Cell membrane</location>
        <topology evidence="1">Multi-pass membrane protein</topology>
    </subcellularLocation>
</comment>
<comment type="similarity">
    <text evidence="1">Belongs to the UPF0391 family.</text>
</comment>
<feature type="chain" id="PRO_0000256761" description="UPF0391 membrane protein Pfl01_0044">
    <location>
        <begin position="1"/>
        <end position="54"/>
    </location>
</feature>
<feature type="transmembrane region" description="Helical" evidence="1">
    <location>
        <begin position="4"/>
        <end position="24"/>
    </location>
</feature>
<feature type="transmembrane region" description="Helical" evidence="1">
    <location>
        <begin position="29"/>
        <end position="49"/>
    </location>
</feature>
<evidence type="ECO:0000255" key="1">
    <source>
        <dbReference type="HAMAP-Rule" id="MF_01361"/>
    </source>
</evidence>
<dbReference type="EMBL" id="CP000094">
    <property type="protein sequence ID" value="ABA71788.1"/>
    <property type="molecule type" value="Genomic_DNA"/>
</dbReference>
<dbReference type="RefSeq" id="WP_003177151.1">
    <property type="nucleotide sequence ID" value="NC_007492.2"/>
</dbReference>
<dbReference type="KEGG" id="pfo:Pfl01_0044"/>
<dbReference type="eggNOG" id="COG5487">
    <property type="taxonomic scope" value="Bacteria"/>
</dbReference>
<dbReference type="HOGENOM" id="CLU_187346_2_1_6"/>
<dbReference type="Proteomes" id="UP000002704">
    <property type="component" value="Chromosome"/>
</dbReference>
<dbReference type="GO" id="GO:0005886">
    <property type="term" value="C:plasma membrane"/>
    <property type="evidence" value="ECO:0007669"/>
    <property type="project" value="UniProtKB-SubCell"/>
</dbReference>
<dbReference type="HAMAP" id="MF_01361">
    <property type="entry name" value="UPF0391"/>
    <property type="match status" value="1"/>
</dbReference>
<dbReference type="InterPro" id="IPR009760">
    <property type="entry name" value="DUF1328"/>
</dbReference>
<dbReference type="NCBIfam" id="NF010226">
    <property type="entry name" value="PRK13682.1-1"/>
    <property type="match status" value="1"/>
</dbReference>
<dbReference type="NCBIfam" id="NF010229">
    <property type="entry name" value="PRK13682.1-4"/>
    <property type="match status" value="1"/>
</dbReference>
<dbReference type="Pfam" id="PF07043">
    <property type="entry name" value="DUF1328"/>
    <property type="match status" value="1"/>
</dbReference>
<dbReference type="PIRSF" id="PIRSF036466">
    <property type="entry name" value="UCP036466"/>
    <property type="match status" value="1"/>
</dbReference>
<name>Y044_PSEPF</name>